<keyword id="KW-0326">Glycosidase</keyword>
<keyword id="KW-0378">Hydrolase</keyword>
<keyword id="KW-0456">Lyase</keyword>
<keyword id="KW-0464">Manganese</keyword>
<keyword id="KW-0479">Metal-binding</keyword>
<keyword id="KW-1185">Reference proteome</keyword>
<sequence>MFHDLLEFNEEVLDAINDKNPIVALESTIISHGMPYPDNLTTAIEVENIIRRQGAIPATIAMHQGKIRVGLTQEVMEHLALQKEVIKASRRDISFVLSRKVTASTTVAATMFCAHMAKLPLFVTGGIGGVHQDVTMSFDISADLIELSNTPVTVVCSGAKSILDLPKTLEVLETFGVPVIGYATDEFPAFYSRSSGIPVPQRLNSAEEVANLMSIQQKLNMKNGIVVANPIPVSAELSDEEISPYIKQAHDEAKHMSGKSLTPFLLKRIAELTAGKSLEANIELIKNNAFLGAEIAIAYQKKLFSKKT</sequence>
<name>PSUG_LEGPH</name>
<comment type="function">
    <text evidence="1">Catalyzes the reversible cleavage of pseudouridine 5'-phosphate (PsiMP) to ribose 5-phosphate and uracil. Functions biologically in the cleavage direction, as part of a pseudouridine degradation pathway.</text>
</comment>
<comment type="catalytic activity">
    <reaction evidence="1">
        <text>D-ribose 5-phosphate + uracil = psi-UMP + H2O</text>
        <dbReference type="Rhea" id="RHEA:18337"/>
        <dbReference type="ChEBI" id="CHEBI:15377"/>
        <dbReference type="ChEBI" id="CHEBI:17568"/>
        <dbReference type="ChEBI" id="CHEBI:58380"/>
        <dbReference type="ChEBI" id="CHEBI:78346"/>
        <dbReference type="EC" id="4.2.1.70"/>
    </reaction>
</comment>
<comment type="cofactor">
    <cofactor evidence="1">
        <name>Mn(2+)</name>
        <dbReference type="ChEBI" id="CHEBI:29035"/>
    </cofactor>
    <text evidence="1">Binds 1 Mn(2+) ion per subunit.</text>
</comment>
<comment type="subunit">
    <text evidence="1">Homotrimer.</text>
</comment>
<comment type="similarity">
    <text evidence="1">Belongs to the pseudouridine-5'-phosphate glycosidase family.</text>
</comment>
<accession>Q5ZU79</accession>
<evidence type="ECO:0000255" key="1">
    <source>
        <dbReference type="HAMAP-Rule" id="MF_01876"/>
    </source>
</evidence>
<organism>
    <name type="scientific">Legionella pneumophila subsp. pneumophila (strain Philadelphia 1 / ATCC 33152 / DSM 7513)</name>
    <dbReference type="NCBI Taxonomy" id="272624"/>
    <lineage>
        <taxon>Bacteria</taxon>
        <taxon>Pseudomonadati</taxon>
        <taxon>Pseudomonadota</taxon>
        <taxon>Gammaproteobacteria</taxon>
        <taxon>Legionellales</taxon>
        <taxon>Legionellaceae</taxon>
        <taxon>Legionella</taxon>
    </lineage>
</organism>
<dbReference type="EC" id="4.2.1.70" evidence="1"/>
<dbReference type="EMBL" id="AE017354">
    <property type="protein sequence ID" value="AAU27998.1"/>
    <property type="molecule type" value="Genomic_DNA"/>
</dbReference>
<dbReference type="RefSeq" id="WP_010947645.1">
    <property type="nucleotide sequence ID" value="NC_002942.5"/>
</dbReference>
<dbReference type="RefSeq" id="YP_095945.1">
    <property type="nucleotide sequence ID" value="NC_002942.5"/>
</dbReference>
<dbReference type="SMR" id="Q5ZU79"/>
<dbReference type="STRING" id="272624.lpg1928"/>
<dbReference type="PaxDb" id="272624-lpg1928"/>
<dbReference type="KEGG" id="lpn:lpg1928"/>
<dbReference type="PATRIC" id="fig|272624.6.peg.2013"/>
<dbReference type="eggNOG" id="COG2313">
    <property type="taxonomic scope" value="Bacteria"/>
</dbReference>
<dbReference type="HOGENOM" id="CLU_012201_0_1_6"/>
<dbReference type="OrthoDB" id="9805870at2"/>
<dbReference type="Proteomes" id="UP000000609">
    <property type="component" value="Chromosome"/>
</dbReference>
<dbReference type="GO" id="GO:0005737">
    <property type="term" value="C:cytoplasm"/>
    <property type="evidence" value="ECO:0007669"/>
    <property type="project" value="TreeGrafter"/>
</dbReference>
<dbReference type="GO" id="GO:0016798">
    <property type="term" value="F:hydrolase activity, acting on glycosyl bonds"/>
    <property type="evidence" value="ECO:0007669"/>
    <property type="project" value="UniProtKB-KW"/>
</dbReference>
<dbReference type="GO" id="GO:0046872">
    <property type="term" value="F:metal ion binding"/>
    <property type="evidence" value="ECO:0007669"/>
    <property type="project" value="UniProtKB-KW"/>
</dbReference>
<dbReference type="GO" id="GO:0004730">
    <property type="term" value="F:pseudouridylate synthase activity"/>
    <property type="evidence" value="ECO:0007669"/>
    <property type="project" value="UniProtKB-UniRule"/>
</dbReference>
<dbReference type="GO" id="GO:0046113">
    <property type="term" value="P:nucleobase catabolic process"/>
    <property type="evidence" value="ECO:0007669"/>
    <property type="project" value="UniProtKB-UniRule"/>
</dbReference>
<dbReference type="Gene3D" id="3.40.1790.10">
    <property type="entry name" value="Indigoidine synthase domain"/>
    <property type="match status" value="1"/>
</dbReference>
<dbReference type="HAMAP" id="MF_01876">
    <property type="entry name" value="PsiMP_glycosidase"/>
    <property type="match status" value="1"/>
</dbReference>
<dbReference type="InterPro" id="IPR022830">
    <property type="entry name" value="Indigdn_synthA-like"/>
</dbReference>
<dbReference type="InterPro" id="IPR007342">
    <property type="entry name" value="PsuG"/>
</dbReference>
<dbReference type="PANTHER" id="PTHR42909:SF1">
    <property type="entry name" value="CARBOHYDRATE KINASE PFKB DOMAIN-CONTAINING PROTEIN"/>
    <property type="match status" value="1"/>
</dbReference>
<dbReference type="PANTHER" id="PTHR42909">
    <property type="entry name" value="ZGC:136858"/>
    <property type="match status" value="1"/>
</dbReference>
<dbReference type="Pfam" id="PF04227">
    <property type="entry name" value="Indigoidine_A"/>
    <property type="match status" value="1"/>
</dbReference>
<dbReference type="SUPFAM" id="SSF110581">
    <property type="entry name" value="Indigoidine synthase A-like"/>
    <property type="match status" value="1"/>
</dbReference>
<feature type="chain" id="PRO_0000390527" description="Pseudouridine-5'-phosphate glycosidase">
    <location>
        <begin position="1"/>
        <end position="308"/>
    </location>
</feature>
<feature type="active site" description="Proton donor" evidence="1">
    <location>
        <position position="26"/>
    </location>
</feature>
<feature type="active site" description="Nucleophile" evidence="1">
    <location>
        <position position="160"/>
    </location>
</feature>
<feature type="binding site" evidence="1">
    <location>
        <position position="87"/>
    </location>
    <ligand>
        <name>substrate</name>
    </ligand>
</feature>
<feature type="binding site" evidence="1">
    <location>
        <position position="107"/>
    </location>
    <ligand>
        <name>substrate</name>
    </ligand>
</feature>
<feature type="binding site" evidence="1">
    <location>
        <position position="139"/>
    </location>
    <ligand>
        <name>Mn(2+)</name>
        <dbReference type="ChEBI" id="CHEBI:29035"/>
    </ligand>
</feature>
<feature type="binding site" evidence="1">
    <location>
        <begin position="141"/>
        <end position="143"/>
    </location>
    <ligand>
        <name>substrate</name>
    </ligand>
</feature>
<proteinExistence type="inferred from homology"/>
<reference key="1">
    <citation type="journal article" date="2004" name="Science">
        <title>The genomic sequence of the accidental pathogen Legionella pneumophila.</title>
        <authorList>
            <person name="Chien M."/>
            <person name="Morozova I."/>
            <person name="Shi S."/>
            <person name="Sheng H."/>
            <person name="Chen J."/>
            <person name="Gomez S.M."/>
            <person name="Asamani G."/>
            <person name="Hill K."/>
            <person name="Nuara J."/>
            <person name="Feder M."/>
            <person name="Rineer J."/>
            <person name="Greenberg J.J."/>
            <person name="Steshenko V."/>
            <person name="Park S.H."/>
            <person name="Zhao B."/>
            <person name="Teplitskaya E."/>
            <person name="Edwards J.R."/>
            <person name="Pampou S."/>
            <person name="Georghiou A."/>
            <person name="Chou I.-C."/>
            <person name="Iannuccilli W."/>
            <person name="Ulz M.E."/>
            <person name="Kim D.H."/>
            <person name="Geringer-Sameth A."/>
            <person name="Goldsberry C."/>
            <person name="Morozov P."/>
            <person name="Fischer S.G."/>
            <person name="Segal G."/>
            <person name="Qu X."/>
            <person name="Rzhetsky A."/>
            <person name="Zhang P."/>
            <person name="Cayanis E."/>
            <person name="De Jong P.J."/>
            <person name="Ju J."/>
            <person name="Kalachikov S."/>
            <person name="Shuman H.A."/>
            <person name="Russo J.J."/>
        </authorList>
    </citation>
    <scope>NUCLEOTIDE SEQUENCE [LARGE SCALE GENOMIC DNA]</scope>
    <source>
        <strain>Philadelphia 1 / ATCC 33152 / DSM 7513</strain>
    </source>
</reference>
<protein>
    <recommendedName>
        <fullName evidence="1">Pseudouridine-5'-phosphate glycosidase</fullName>
        <shortName evidence="1">PsiMP glycosidase</shortName>
        <ecNumber evidence="1">4.2.1.70</ecNumber>
    </recommendedName>
</protein>
<gene>
    <name evidence="1" type="primary">psuG</name>
    <name type="synonym">indA</name>
    <name type="ordered locus">lpg1928</name>
</gene>